<protein>
    <recommendedName>
        <fullName evidence="1">Tryptophan synthase beta chain</fullName>
        <ecNumber evidence="1">4.2.1.20</ecNumber>
    </recommendedName>
</protein>
<dbReference type="EC" id="4.2.1.20" evidence="1"/>
<dbReference type="EMBL" id="CP000569">
    <property type="protein sequence ID" value="ABN73573.1"/>
    <property type="molecule type" value="Genomic_DNA"/>
</dbReference>
<dbReference type="RefSeq" id="WP_005611712.1">
    <property type="nucleotide sequence ID" value="NC_009053.1"/>
</dbReference>
<dbReference type="SMR" id="A3MZI7"/>
<dbReference type="STRING" id="416269.APL_0469"/>
<dbReference type="EnsemblBacteria" id="ABN73573">
    <property type="protein sequence ID" value="ABN73573"/>
    <property type="gene ID" value="APL_0469"/>
</dbReference>
<dbReference type="KEGG" id="apl:APL_0469"/>
<dbReference type="eggNOG" id="COG0133">
    <property type="taxonomic scope" value="Bacteria"/>
</dbReference>
<dbReference type="HOGENOM" id="CLU_016734_3_1_6"/>
<dbReference type="UniPathway" id="UPA00035">
    <property type="reaction ID" value="UER00044"/>
</dbReference>
<dbReference type="Proteomes" id="UP000001432">
    <property type="component" value="Chromosome"/>
</dbReference>
<dbReference type="GO" id="GO:0005737">
    <property type="term" value="C:cytoplasm"/>
    <property type="evidence" value="ECO:0007669"/>
    <property type="project" value="TreeGrafter"/>
</dbReference>
<dbReference type="GO" id="GO:0004834">
    <property type="term" value="F:tryptophan synthase activity"/>
    <property type="evidence" value="ECO:0007669"/>
    <property type="project" value="UniProtKB-UniRule"/>
</dbReference>
<dbReference type="CDD" id="cd06446">
    <property type="entry name" value="Trp-synth_B"/>
    <property type="match status" value="1"/>
</dbReference>
<dbReference type="FunFam" id="3.40.50.1100:FF:000001">
    <property type="entry name" value="Tryptophan synthase beta chain"/>
    <property type="match status" value="1"/>
</dbReference>
<dbReference type="FunFam" id="3.40.50.1100:FF:000004">
    <property type="entry name" value="Tryptophan synthase beta chain"/>
    <property type="match status" value="1"/>
</dbReference>
<dbReference type="Gene3D" id="3.40.50.1100">
    <property type="match status" value="2"/>
</dbReference>
<dbReference type="HAMAP" id="MF_00133">
    <property type="entry name" value="Trp_synth_beta"/>
    <property type="match status" value="1"/>
</dbReference>
<dbReference type="InterPro" id="IPR006653">
    <property type="entry name" value="Trp_synth_b_CS"/>
</dbReference>
<dbReference type="InterPro" id="IPR006654">
    <property type="entry name" value="Trp_synth_beta"/>
</dbReference>
<dbReference type="InterPro" id="IPR023026">
    <property type="entry name" value="Trp_synth_beta/beta-like"/>
</dbReference>
<dbReference type="InterPro" id="IPR001926">
    <property type="entry name" value="TrpB-like_PALP"/>
</dbReference>
<dbReference type="InterPro" id="IPR036052">
    <property type="entry name" value="TrpB-like_PALP_sf"/>
</dbReference>
<dbReference type="NCBIfam" id="TIGR00263">
    <property type="entry name" value="trpB"/>
    <property type="match status" value="1"/>
</dbReference>
<dbReference type="PANTHER" id="PTHR48077:SF3">
    <property type="entry name" value="TRYPTOPHAN SYNTHASE"/>
    <property type="match status" value="1"/>
</dbReference>
<dbReference type="PANTHER" id="PTHR48077">
    <property type="entry name" value="TRYPTOPHAN SYNTHASE-RELATED"/>
    <property type="match status" value="1"/>
</dbReference>
<dbReference type="Pfam" id="PF00291">
    <property type="entry name" value="PALP"/>
    <property type="match status" value="1"/>
</dbReference>
<dbReference type="PIRSF" id="PIRSF001413">
    <property type="entry name" value="Trp_syn_beta"/>
    <property type="match status" value="1"/>
</dbReference>
<dbReference type="SUPFAM" id="SSF53686">
    <property type="entry name" value="Tryptophan synthase beta subunit-like PLP-dependent enzymes"/>
    <property type="match status" value="1"/>
</dbReference>
<dbReference type="PROSITE" id="PS00168">
    <property type="entry name" value="TRP_SYNTHASE_BETA"/>
    <property type="match status" value="1"/>
</dbReference>
<organism>
    <name type="scientific">Actinobacillus pleuropneumoniae serotype 5b (strain L20)</name>
    <dbReference type="NCBI Taxonomy" id="416269"/>
    <lineage>
        <taxon>Bacteria</taxon>
        <taxon>Pseudomonadati</taxon>
        <taxon>Pseudomonadota</taxon>
        <taxon>Gammaproteobacteria</taxon>
        <taxon>Pasteurellales</taxon>
        <taxon>Pasteurellaceae</taxon>
        <taxon>Actinobacillus</taxon>
    </lineage>
</organism>
<proteinExistence type="inferred from homology"/>
<evidence type="ECO:0000255" key="1">
    <source>
        <dbReference type="HAMAP-Rule" id="MF_00133"/>
    </source>
</evidence>
<reference key="1">
    <citation type="journal article" date="2008" name="J. Bacteriol.">
        <title>The complete genome sequence of Actinobacillus pleuropneumoniae L20 (serotype 5b).</title>
        <authorList>
            <person name="Foote S.J."/>
            <person name="Bosse J.T."/>
            <person name="Bouevitch A.B."/>
            <person name="Langford P.R."/>
            <person name="Young N.M."/>
            <person name="Nash J.H.E."/>
        </authorList>
    </citation>
    <scope>NUCLEOTIDE SEQUENCE [LARGE SCALE GENOMIC DNA]</scope>
    <source>
        <strain>L20</strain>
    </source>
</reference>
<feature type="chain" id="PRO_1000076376" description="Tryptophan synthase beta chain">
    <location>
        <begin position="1"/>
        <end position="396"/>
    </location>
</feature>
<feature type="modified residue" description="N6-(pyridoxal phosphate)lysine" evidence="1">
    <location>
        <position position="88"/>
    </location>
</feature>
<comment type="function">
    <text evidence="1">The beta subunit is responsible for the synthesis of L-tryptophan from indole and L-serine.</text>
</comment>
<comment type="catalytic activity">
    <reaction evidence="1">
        <text>(1S,2R)-1-C-(indol-3-yl)glycerol 3-phosphate + L-serine = D-glyceraldehyde 3-phosphate + L-tryptophan + H2O</text>
        <dbReference type="Rhea" id="RHEA:10532"/>
        <dbReference type="ChEBI" id="CHEBI:15377"/>
        <dbReference type="ChEBI" id="CHEBI:33384"/>
        <dbReference type="ChEBI" id="CHEBI:57912"/>
        <dbReference type="ChEBI" id="CHEBI:58866"/>
        <dbReference type="ChEBI" id="CHEBI:59776"/>
        <dbReference type="EC" id="4.2.1.20"/>
    </reaction>
</comment>
<comment type="cofactor">
    <cofactor evidence="1">
        <name>pyridoxal 5'-phosphate</name>
        <dbReference type="ChEBI" id="CHEBI:597326"/>
    </cofactor>
</comment>
<comment type="pathway">
    <text evidence="1">Amino-acid biosynthesis; L-tryptophan biosynthesis; L-tryptophan from chorismate: step 5/5.</text>
</comment>
<comment type="subunit">
    <text evidence="1">Tetramer of two alpha and two beta chains.</text>
</comment>
<comment type="similarity">
    <text evidence="1">Belongs to the TrpB family.</text>
</comment>
<name>TRPB_ACTP2</name>
<gene>
    <name evidence="1" type="primary">trpB</name>
    <name type="ordered locus">APL_0469</name>
</gene>
<accession>A3MZI7</accession>
<sequence>MSDTLLNPYFGEFGGMYVPEILVPVLKQLEEAFVAAQNDPLFQAEFTDLLKNYAGRPTALTLCRNLTKGSKTKLYLKREDLLHGGAHKTNQVLGQALLAKRMGKTRIIAETGAGQHGVATALACAMLDLPCVIYMGAKDVERQSPNVFRMRLMGAEVIPVQKGSCSLKDACCEAMRDWAANYETTHYLIGTAAGPHPFPTMVREFQKMIGEETKRQILEKENRLPDAVIAAVGGGSNAIGMFADFIEEKSVQLIGVEPAGKGIETGEHGAPLKHGTTGIYFGMKSPIMQTKDGQIEESYSISAGLDFPSVGPQHAYLNSIGRAEYVSITDQEALDAFQALAQHEGIIPALESSHALAYALKLIAQNPDKEQLLVVNLSGRGDKDIFTVDKILNGGN</sequence>
<keyword id="KW-0028">Amino-acid biosynthesis</keyword>
<keyword id="KW-0057">Aromatic amino acid biosynthesis</keyword>
<keyword id="KW-0456">Lyase</keyword>
<keyword id="KW-0663">Pyridoxal phosphate</keyword>
<keyword id="KW-1185">Reference proteome</keyword>
<keyword id="KW-0822">Tryptophan biosynthesis</keyword>